<comment type="subcellular location">
    <subcellularLocation>
        <location>Plastid</location>
        <location>Chloroplast</location>
    </subcellularLocation>
</comment>
<comment type="similarity">
    <text evidence="1">Belongs to the ycf15 family.</text>
</comment>
<comment type="caution">
    <text evidence="1">Could be the product of a pseudogene.</text>
</comment>
<accession>Q0G9F8</accession>
<protein>
    <recommendedName>
        <fullName>Putative uncharacterized protein ycf15</fullName>
    </recommendedName>
</protein>
<dbReference type="EMBL" id="DQ899947">
    <property type="protein sequence ID" value="ABI32553.1"/>
    <property type="molecule type" value="Genomic_DNA"/>
</dbReference>
<dbReference type="EMBL" id="DQ899947">
    <property type="protein sequence ID" value="ABI32571.1"/>
    <property type="molecule type" value="Genomic_DNA"/>
</dbReference>
<dbReference type="GO" id="GO:0009507">
    <property type="term" value="C:chloroplast"/>
    <property type="evidence" value="ECO:0007669"/>
    <property type="project" value="UniProtKB-SubCell"/>
</dbReference>
<dbReference type="InterPro" id="IPR019645">
    <property type="entry name" value="Uncharacterised_Ycf15"/>
</dbReference>
<dbReference type="Pfam" id="PF10705">
    <property type="entry name" value="Ycf15"/>
    <property type="match status" value="1"/>
</dbReference>
<feature type="chain" id="PRO_0000360387" description="Putative uncharacterized protein ycf15">
    <location>
        <begin position="1"/>
        <end position="77"/>
    </location>
</feature>
<geneLocation type="chloroplast"/>
<reference key="1">
    <citation type="journal article" date="2006" name="BMC Evol. Biol.">
        <title>Complete plastid genome sequences of Drimys, Liriodendron, and Piper: implications for the phylogenetic relationships of magnoliids.</title>
        <authorList>
            <person name="Cai Z."/>
            <person name="Penaflor C."/>
            <person name="Kuehl J.V."/>
            <person name="Leebens-Mack J."/>
            <person name="Carlson J.E."/>
            <person name="dePamphilis C.W."/>
            <person name="Boore J.L."/>
            <person name="Jansen R.K."/>
        </authorList>
    </citation>
    <scope>NUCLEOTIDE SEQUENCE [LARGE SCALE GENOMIC DNA]</scope>
</reference>
<gene>
    <name type="primary">ycf15-A</name>
</gene>
<gene>
    <name type="primary">ycf15-B</name>
</gene>
<sequence length="77" mass="9233">MLLLKHGRIEILDQNTMYGWYELPKQEFLNGEQPEPLTHYIKQFPLMKHVNPLENKKDACPMKWLLLSAPITNHWFN</sequence>
<keyword id="KW-0150">Chloroplast</keyword>
<keyword id="KW-0934">Plastid</keyword>
<proteinExistence type="uncertain"/>
<evidence type="ECO:0000305" key="1"/>
<name>YCF15_LIRTU</name>
<organism>
    <name type="scientific">Liriodendron tulipifera</name>
    <name type="common">Tuliptree</name>
    <name type="synonym">Tulip poplar</name>
    <dbReference type="NCBI Taxonomy" id="3415"/>
    <lineage>
        <taxon>Eukaryota</taxon>
        <taxon>Viridiplantae</taxon>
        <taxon>Streptophyta</taxon>
        <taxon>Embryophyta</taxon>
        <taxon>Tracheophyta</taxon>
        <taxon>Spermatophyta</taxon>
        <taxon>Magnoliopsida</taxon>
        <taxon>Magnoliidae</taxon>
        <taxon>Magnoliales</taxon>
        <taxon>Magnoliaceae</taxon>
        <taxon>Liriodendron</taxon>
    </lineage>
</organism>